<keyword id="KW-0053">Apoptosis</keyword>
<keyword id="KW-0165">Cleavage on pair of basic residues</keyword>
<keyword id="KW-0175">Coiled coil</keyword>
<keyword id="KW-1015">Disulfide bond</keyword>
<keyword id="KW-1168">Fusion of virus membrane with host membrane</keyword>
<keyword id="KW-0325">Glycoprotein</keyword>
<keyword id="KW-1032">Host cell membrane</keyword>
<keyword id="KW-1039">Host endosome</keyword>
<keyword id="KW-1043">Host membrane</keyword>
<keyword id="KW-0945">Host-virus interaction</keyword>
<keyword id="KW-0472">Membrane</keyword>
<keyword id="KW-0812">Transmembrane</keyword>
<keyword id="KW-1133">Transmembrane helix</keyword>
<keyword id="KW-1161">Viral attachment to host cell</keyword>
<keyword id="KW-0261">Viral envelope protein</keyword>
<keyword id="KW-1162">Viral penetration into host cytoplasm</keyword>
<keyword id="KW-0946">Virion</keyword>
<keyword id="KW-1160">Virus entry into host cell</keyword>
<evidence type="ECO:0000250" key="1"/>
<evidence type="ECO:0000255" key="2"/>
<evidence type="ECO:0000256" key="3">
    <source>
        <dbReference type="SAM" id="MobiDB-lite"/>
    </source>
</evidence>
<evidence type="ECO:0000305" key="4"/>
<name>ENV_SIVGB</name>
<sequence>MSTGNVYQELIRRYLVVVKKLYEGKYEVSRSFSYTMFSLLVGIIGKQYVTVFYGVPVWKEAKTHLICATDNSSLWVTTNCIPSLPDYDEVEIPDIKENFTGLIRENQIVYQAWHAMGSMLDTILKPCVKINPYCVKMQCQETENVSATTAKPITTPTTTSTVASSTEIYLDVDKNNTEEKVERNHVCRYNITGLCRDSKEEIVTNFRGDDVKCENNTCYMNHCNESVNTEDCQKGLLIRCILGCVPPGYVMLRYNEKLNNNKLCSNISAVQCTQHLVATVSSFFGFNGTMHKEGELIPIDDKYRGPEEFHQRKFVYKVPGKYGLKIECHRKGNRSVVSTPSATGLLFYHGLEPGKNLKKGMCTFKGRWGLALWSLAKELNKLNDSIKVNQTCKNFTSTGEENKQNTDKQKEFAKCIKTLKIDNYTTSGDRAAEMMMMTCQGEMFFCNVTRIMRAWNDPNEKKWYPYASCQIRQIVDDWMQVGRKIYLPPTSGFNNHIRCTHRVTEMYFEMQKIDSNETKMQIKFLPPSETSNQFVAYGAHYKLVKIMPIGIAPTDVKRHTLPEHHKEKRGAVILGILGLLSLAGSAMGSVSVALTVQSQSLVTGIVEQQKQLLKLIEQQSELLKLTIWGVKNLQTRLTSLENYIKDQALLSQWGCSWAQVCHTSVEWTNTSITPNWTSETWKEWETRTDYLQQNITEMLKQAYDREQRNTYELQKLGDLTSWASWFDFTWWVQYLKWGVFLVLGIIGLRILLALWNTISRFRQGYRPVFSQDCQQNLYRKRPDNGEEESNSLELGEHNSENLKEESLNRSLIEDLTSFARE</sequence>
<organismHost>
    <name type="scientific">Cercopithecidae</name>
    <name type="common">Old World monkeys</name>
    <dbReference type="NCBI Taxonomy" id="9527"/>
</organismHost>
<accession>P22380</accession>
<reference key="1">
    <citation type="journal article" date="1989" name="Nature">
        <title>Sequence of a novel simian immunodeficiency virus from a wild-caught African mandrill.</title>
        <authorList>
            <person name="Tsujimoto H."/>
            <person name="Hasegawa A."/>
            <person name="Maki N."/>
            <person name="Fukasawa M."/>
            <person name="Miura T."/>
            <person name="Speidel S."/>
            <person name="Cooper R.W."/>
            <person name="Moriyama E.N."/>
            <person name="Gojobori T."/>
            <person name="Hayami M."/>
        </authorList>
    </citation>
    <scope>NUCLEOTIDE SEQUENCE [GENOMIC RNA]</scope>
</reference>
<feature type="chain" id="PRO_0000085304" description="Envelope glycoprotein gp160">
    <location>
        <begin position="1"/>
        <end position="821"/>
    </location>
</feature>
<feature type="chain" id="PRO_0000239509" description="Surface protein gp120" evidence="1">
    <location>
        <begin position="1"/>
        <end position="569"/>
    </location>
</feature>
<feature type="chain" id="PRO_0000239510" description="Transmembrane protein gp41" evidence="1">
    <location>
        <begin position="570"/>
        <end position="821"/>
    </location>
</feature>
<feature type="topological domain" description="Extracellular" evidence="2">
    <location>
        <begin position="1"/>
        <end position="737"/>
    </location>
</feature>
<feature type="transmembrane region" description="Helical" evidence="2">
    <location>
        <begin position="738"/>
        <end position="758"/>
    </location>
</feature>
<feature type="topological domain" description="Cytoplasmic" evidence="2">
    <location>
        <begin position="759"/>
        <end position="821"/>
    </location>
</feature>
<feature type="region of interest" description="V1">
    <location>
        <begin position="139"/>
        <end position="186"/>
    </location>
</feature>
<feature type="region of interest" description="V2">
    <location>
        <begin position="187"/>
        <end position="223"/>
    </location>
</feature>
<feature type="region of interest" description="V3">
    <location>
        <begin position="328"/>
        <end position="361"/>
    </location>
</feature>
<feature type="region of interest" description="V4">
    <location>
        <begin position="446"/>
        <end position="469"/>
    </location>
</feature>
<feature type="region of interest" description="V5">
    <location>
        <begin position="515"/>
        <end position="526"/>
    </location>
</feature>
<feature type="region of interest" description="Fusion peptide" evidence="2">
    <location>
        <begin position="570"/>
        <end position="590"/>
    </location>
</feature>
<feature type="region of interest" description="MPER; binding to GalCer" evidence="1">
    <location>
        <begin position="715"/>
        <end position="736"/>
    </location>
</feature>
<feature type="region of interest" description="Disordered" evidence="3">
    <location>
        <begin position="780"/>
        <end position="805"/>
    </location>
</feature>
<feature type="coiled-coil region" evidence="2">
    <location>
        <begin position="607"/>
        <end position="627"/>
    </location>
</feature>
<feature type="short sequence motif" description="YXXV motif; contains endocytosis signal" evidence="1">
    <location>
        <begin position="765"/>
        <end position="768"/>
    </location>
</feature>
<feature type="compositionally biased region" description="Basic and acidic residues" evidence="3">
    <location>
        <begin position="794"/>
        <end position="805"/>
    </location>
</feature>
<feature type="site" description="Cleavage; by host furin" evidence="2">
    <location>
        <begin position="569"/>
        <end position="570"/>
    </location>
</feature>
<feature type="glycosylation site" description="N-linked (GlcNAc...) asparagine; by host" evidence="2">
    <location>
        <position position="71"/>
    </location>
</feature>
<feature type="glycosylation site" description="N-linked (GlcNAc...) asparagine; by host" evidence="2">
    <location>
        <position position="98"/>
    </location>
</feature>
<feature type="glycosylation site" description="N-linked (GlcNAc...) asparagine; by host" evidence="2">
    <location>
        <position position="144"/>
    </location>
</feature>
<feature type="glycosylation site" description="N-linked (GlcNAc...) asparagine; by host" evidence="2">
    <location>
        <position position="175"/>
    </location>
</feature>
<feature type="glycosylation site" description="N-linked (GlcNAc...) asparagine; by host" evidence="2">
    <location>
        <position position="190"/>
    </location>
</feature>
<feature type="glycosylation site" description="N-linked (GlcNAc...) asparagine; by host" evidence="2">
    <location>
        <position position="215"/>
    </location>
</feature>
<feature type="glycosylation site" description="N-linked (GlcNAc...) asparagine; by host" evidence="2">
    <location>
        <position position="224"/>
    </location>
</feature>
<feature type="glycosylation site" description="N-linked (GlcNAc...) asparagine; by host" evidence="2">
    <location>
        <position position="266"/>
    </location>
</feature>
<feature type="glycosylation site" description="N-linked (GlcNAc...) asparagine; by host" evidence="2">
    <location>
        <position position="287"/>
    </location>
</feature>
<feature type="glycosylation site" description="N-linked (GlcNAc...) asparagine; by host" evidence="2">
    <location>
        <position position="333"/>
    </location>
</feature>
<feature type="glycosylation site" description="N-linked (GlcNAc...) asparagine; by host" evidence="2">
    <location>
        <position position="383"/>
    </location>
</feature>
<feature type="glycosylation site" description="N-linked (GlcNAc...) asparagine; by host" evidence="2">
    <location>
        <position position="389"/>
    </location>
</feature>
<feature type="glycosylation site" description="N-linked (GlcNAc...) asparagine; by host" evidence="2">
    <location>
        <position position="394"/>
    </location>
</feature>
<feature type="glycosylation site" description="N-linked (GlcNAc...) asparagine; by host" evidence="2">
    <location>
        <position position="423"/>
    </location>
</feature>
<feature type="glycosylation site" description="N-linked (GlcNAc...) asparagine; by host" evidence="2">
    <location>
        <position position="447"/>
    </location>
</feature>
<feature type="glycosylation site" description="N-linked (GlcNAc...) asparagine; by host" evidence="2">
    <location>
        <position position="516"/>
    </location>
</feature>
<feature type="glycosylation site" description="N-linked (GlcNAc...) asparagine; by host" evidence="2">
    <location>
        <position position="669"/>
    </location>
</feature>
<feature type="glycosylation site" description="N-linked (GlcNAc...) asparagine; by host" evidence="2">
    <location>
        <position position="675"/>
    </location>
</feature>
<feature type="glycosylation site" description="N-linked (GlcNAc...) asparagine; by host" evidence="2">
    <location>
        <position position="694"/>
    </location>
</feature>
<feature type="disulfide bond" evidence="1">
    <location>
        <begin position="67"/>
        <end position="80"/>
    </location>
</feature>
<feature type="disulfide bond" evidence="1">
    <location>
        <begin position="127"/>
        <end position="232"/>
    </location>
</feature>
<feature type="disulfide bond" evidence="1">
    <location>
        <begin position="134"/>
        <end position="223"/>
    </location>
</feature>
<feature type="disulfide bond" evidence="1">
    <location>
        <begin position="139"/>
        <end position="187"/>
    </location>
</feature>
<feature type="disulfide bond" evidence="1">
    <location>
        <begin position="244"/>
        <end position="272"/>
    </location>
</feature>
<feature type="disulfide bond" evidence="1">
    <location>
        <begin position="439"/>
        <end position="499"/>
    </location>
</feature>
<feature type="disulfide bond" evidence="1">
    <location>
        <begin position="446"/>
        <end position="469"/>
    </location>
</feature>
<protein>
    <recommendedName>
        <fullName>Envelope glycoprotein gp160</fullName>
    </recommendedName>
    <alternativeName>
        <fullName>Env polyprotein</fullName>
    </alternativeName>
    <component>
        <recommendedName>
            <fullName>Surface protein gp120</fullName>
            <shortName>SU</shortName>
        </recommendedName>
        <alternativeName>
            <fullName>Glycoprotein 120</fullName>
            <shortName>gp120</shortName>
        </alternativeName>
    </component>
    <component>
        <recommendedName>
            <fullName>Transmembrane protein gp41</fullName>
            <shortName>TM</shortName>
        </recommendedName>
        <alternativeName>
            <fullName>Glycoprotein 32</fullName>
            <shortName>gp32</shortName>
        </alternativeName>
    </component>
</protein>
<proteinExistence type="inferred from homology"/>
<gene>
    <name type="primary">env</name>
</gene>
<organism>
    <name type="scientific">Simian immunodeficiency virus (isolate GB1)</name>
    <name type="common">SIV-mnd</name>
    <name type="synonym">Simian immunodeficiency virus mandrill</name>
    <dbReference type="NCBI Taxonomy" id="11732"/>
    <lineage>
        <taxon>Viruses</taxon>
        <taxon>Riboviria</taxon>
        <taxon>Pararnavirae</taxon>
        <taxon>Artverviricota</taxon>
        <taxon>Revtraviricetes</taxon>
        <taxon>Ortervirales</taxon>
        <taxon>Retroviridae</taxon>
        <taxon>Orthoretrovirinae</taxon>
        <taxon>Lentivirus</taxon>
        <taxon>Simian immunodeficiency virus</taxon>
    </lineage>
</organism>
<dbReference type="EMBL" id="M27470">
    <property type="protein sequence ID" value="AAB49574.1"/>
    <property type="molecule type" value="Genomic_RNA"/>
</dbReference>
<dbReference type="SMR" id="P22380"/>
<dbReference type="GlyCosmos" id="P22380">
    <property type="glycosylation" value="19 sites, No reported glycans"/>
</dbReference>
<dbReference type="Proteomes" id="UP000259373">
    <property type="component" value="Segment"/>
</dbReference>
<dbReference type="GO" id="GO:0044175">
    <property type="term" value="C:host cell endosome membrane"/>
    <property type="evidence" value="ECO:0007669"/>
    <property type="project" value="UniProtKB-SubCell"/>
</dbReference>
<dbReference type="GO" id="GO:0020002">
    <property type="term" value="C:host cell plasma membrane"/>
    <property type="evidence" value="ECO:0007669"/>
    <property type="project" value="UniProtKB-SubCell"/>
</dbReference>
<dbReference type="GO" id="GO:0016020">
    <property type="term" value="C:membrane"/>
    <property type="evidence" value="ECO:0007669"/>
    <property type="project" value="UniProtKB-KW"/>
</dbReference>
<dbReference type="GO" id="GO:0019031">
    <property type="term" value="C:viral envelope"/>
    <property type="evidence" value="ECO:0007669"/>
    <property type="project" value="UniProtKB-KW"/>
</dbReference>
<dbReference type="GO" id="GO:0055036">
    <property type="term" value="C:virion membrane"/>
    <property type="evidence" value="ECO:0007669"/>
    <property type="project" value="UniProtKB-SubCell"/>
</dbReference>
<dbReference type="GO" id="GO:0005198">
    <property type="term" value="F:structural molecule activity"/>
    <property type="evidence" value="ECO:0007669"/>
    <property type="project" value="InterPro"/>
</dbReference>
<dbReference type="GO" id="GO:0039663">
    <property type="term" value="P:membrane fusion involved in viral entry into host cell"/>
    <property type="evidence" value="ECO:0007669"/>
    <property type="project" value="UniProtKB-KW"/>
</dbReference>
<dbReference type="GO" id="GO:0046718">
    <property type="term" value="P:symbiont entry into host cell"/>
    <property type="evidence" value="ECO:0007669"/>
    <property type="project" value="UniProtKB-KW"/>
</dbReference>
<dbReference type="GO" id="GO:0019062">
    <property type="term" value="P:virion attachment to host cell"/>
    <property type="evidence" value="ECO:0007669"/>
    <property type="project" value="UniProtKB-KW"/>
</dbReference>
<dbReference type="CDD" id="cd09909">
    <property type="entry name" value="HIV-1-like_HR1-HR2"/>
    <property type="match status" value="1"/>
</dbReference>
<dbReference type="Gene3D" id="1.10.287.210">
    <property type="match status" value="1"/>
</dbReference>
<dbReference type="Gene3D" id="2.170.40.20">
    <property type="entry name" value="Human immunodeficiency virus 1, Gp160, envelope glycoprotein"/>
    <property type="match status" value="2"/>
</dbReference>
<dbReference type="InterPro" id="IPR036377">
    <property type="entry name" value="Gp120_core_sf"/>
</dbReference>
<dbReference type="InterPro" id="IPR000328">
    <property type="entry name" value="GP41-like"/>
</dbReference>
<dbReference type="InterPro" id="IPR000777">
    <property type="entry name" value="HIV1_Gp120"/>
</dbReference>
<dbReference type="Pfam" id="PF00516">
    <property type="entry name" value="GP120"/>
    <property type="match status" value="1"/>
</dbReference>
<dbReference type="Pfam" id="PF00517">
    <property type="entry name" value="GP41"/>
    <property type="match status" value="1"/>
</dbReference>
<dbReference type="SUPFAM" id="SSF56502">
    <property type="entry name" value="gp120 core"/>
    <property type="match status" value="1"/>
</dbReference>
<dbReference type="SUPFAM" id="SSF58069">
    <property type="entry name" value="Virus ectodomain"/>
    <property type="match status" value="1"/>
</dbReference>
<comment type="function">
    <text evidence="1">The surface protein gp120 (SU) attaches the virus to the host lymphoid cell by binding to the primary receptor CD4. This interaction induces a structural rearrangement creating a high affinity binding site for a chemokine coreceptor like CCR5. This peculiar 2 stage receptor-interaction strategy allows gp120 to maintain the highly conserved coreceptor-binding site in a cryptic conformation, protected from neutralizing antibodies. These changes are transmitted to the transmembrane protein gp41 and are thought to activate its fusogenic potential by unmasking its fusion peptide (By similarity).</text>
</comment>
<comment type="function">
    <text evidence="1">Surface protein gp120 (SU) may target the virus to gut-associated lymphoid tissue (GALT) by binding host ITGA4/ITGB7 (alpha-4/beta-7 integrins), a complex that mediates T-cell migration to the GALT. Interaction between gp120 and ITGA4/ITGB7 would allow the virus to enter GALT early in the infection, infecting and killing most of GALT's resting CD4+ T-cells. This T-cell depletion is believed to be the major insult to the host immune system leading to AIDS (By similarity).</text>
</comment>
<comment type="function">
    <text evidence="1">The surface protein gp120 is a ligand for CD209/DC-SIGN and CLEC4M/DC-SIGNR, which are respectively found on dendritic cells (DCs), and on endothelial cells of liver sinusoids and lymph node sinuses. These interactions allow capture of viral particles at mucosal surfaces by these cells and subsequent transmission to permissive cells. DCs are professional antigen presenting cells, critical for host immunity by inducing specific immune responses against a broad variety of pathogens. They act as sentinels in various tissues where they take up antigen, process it, and present it to T-cells following migration to lymphoid organs. SIV subverts the migration properties of dendritic cells to gain access to CD4+ T-cells in lymph nodes. Virus transmission to permissive T-cells occurs either in trans (without DCs infection, through viral capture and transmission), or in cis (following DCs productive infection, through the usual CD4-gp120 interaction), thereby inducing a robust infection. In trans infection, bound virions remain infectious over days and it is proposed that they are not degraded, but protected in non-lysosomal acidic organelles within the DCs close to the cell membrane thus contributing to the viral infectious potential during DCs' migration from the periphery to the lymphoid tissues. On arrival at lymphoid tissues, intact virions recycle back to DCs' cell surface allowing virus transmission to CD4+ T-cells. Virion capture also seems to lead to MHC-II-restricted viral antigen presentation, and probably to the activation of SIV-specific CD4+ cells (By similarity).</text>
</comment>
<comment type="function">
    <text evidence="1">The transmembrane protein gp41 (TM) acts as a class I viral fusion protein. Under the current model, the protein has at least 3 conformational states: pre-fusion native state, pre-hairpin intermediate state, and post-fusion hairpin state. During fusion of viral and target intracellular membranes, the coiled coil regions (heptad repeats) assume a trimer-of-hairpins structure, positioning the fusion peptide in close proximity to the C-terminal region of the ectodomain. The formation of this structure appears to drive apposition and subsequent fusion of viral and target cell membranes. Complete fusion occurs in host cell endosomes. The virus undergoes clathrin-dependent internalization long before endosomal fusion, thus minimizing the surface exposure of conserved viral epitopes during fusion and reducing the efficacy of inhibitors targeting these epitopes. Membranes fusion leads to delivery of the nucleocapsid into the cytoplasm (By similarity).</text>
</comment>
<comment type="function">
    <text evidence="1">The envelope glycoprotein gp160 precursor down-modulates cell surface CD4 antigen by interacting with it in the endoplasmic reticulum and blocking its transport to the cell surface.</text>
</comment>
<comment type="function">
    <text evidence="1">The gp120-gp41 heterodimer allows rapid transcytosis of the virus through CD4 negative cells such as simple epithelial monolayers of the intestinal, rectal and endocervical epithelial barriers. Both gp120 and gp41 specifically recognize glycosphingolipids galactosyl-ceramide (GalCer) or 3' sulfo-galactosyl-ceramide (GalS) present in the lipid rafts structures of epithelial cells. Binding to these alternative receptors allows the rapid transcytosis of the virus through the epithelial cells. This transcytotic vesicle-mediated transport of virions from the apical side to the basolateral side of the epithelial cells does not involve infection of the cells themselves (By similarity).</text>
</comment>
<comment type="subunit">
    <molecule>Surface protein gp120</molecule>
    <text evidence="1">The mature envelope protein (Env) consists of a homotrimer of non-covalently associated gp120-gp41 heterodimers. The resulting complex protrudes from the virus surface as a spike. Interacts with host CD4 and CCR5 (By similarity). Gp120 also interacts with the C-type lectins CD209/DC-SIGN and CLEC4M/DC-SIGNR (collectively referred to as DC-SIGN(R)).</text>
</comment>
<comment type="subunit">
    <molecule>Transmembrane protein gp41</molecule>
    <text evidence="1">The mature envelope protein (Env) consists of a homotrimer of non-covalently associated gp120-gp41 heterodimers. The resulting complex protrudes from the virus surface as a spike.</text>
</comment>
<comment type="subcellular location">
    <molecule>Transmembrane protein gp41</molecule>
    <subcellularLocation>
        <location evidence="1">Virion membrane</location>
        <topology evidence="1">Single-pass type I membrane protein</topology>
    </subcellularLocation>
    <subcellularLocation>
        <location evidence="1">Host cell membrane</location>
        <topology evidence="1">Single-pass type I membrane protein</topology>
    </subcellularLocation>
    <subcellularLocation>
        <location evidence="4">Host endosome membrane</location>
        <topology evidence="4">Single-pass type I membrane protein</topology>
    </subcellularLocation>
    <text evidence="1">It is probably concentrated at the site of budding and incorporated into the virions possibly by contacts between the cytoplasmic tail of Env and the N-terminus of Gag.</text>
</comment>
<comment type="subcellular location">
    <molecule>Surface protein gp120</molecule>
    <subcellularLocation>
        <location evidence="1">Virion membrane</location>
        <topology evidence="1">Peripheral membrane protein</topology>
    </subcellularLocation>
    <subcellularLocation>
        <location evidence="1">Host cell membrane</location>
        <topology evidence="1">Peripheral membrane protein</topology>
    </subcellularLocation>
    <subcellularLocation>
        <location evidence="4">Host endosome membrane</location>
        <topology evidence="4">Peripheral membrane protein</topology>
    </subcellularLocation>
    <text evidence="1">The surface protein is not anchored to the viral envelope, but associates with the extravirion surface through its binding to TM. It is probably concentrated at the site of budding and incorporated into the virions possibly by contacts between the cytoplasmic tail of Env and the N-terminus of Gag (By similarity).</text>
</comment>
<comment type="domain">
    <text evidence="1">Some of the most genetically diverse regions of the viral genome are present in Env. They are called variable regions 1 through 5 (V1 through V5) (By similarity).</text>
</comment>
<comment type="PTM">
    <text evidence="1">Specific enzymatic cleavages in vivo yield mature proteins. Envelope glycoproteins are synthesized as an inactive precursor that is heavily N-glycosylated and processed likely by host cell furin in the Golgi to yield the mature SU and TM proteins. The cleavage site between SU and TM requires the minimal sequence [KR]-X-[KR]-R (By similarity).</text>
</comment>
<comment type="miscellaneous">
    <text>This is an African mandrill isolate.</text>
</comment>